<comment type="similarity">
    <text evidence="1">Belongs to the bacterial ribosomal protein bL34 family.</text>
</comment>
<accession>Q8EKT3</accession>
<protein>
    <recommendedName>
        <fullName evidence="1">Large ribosomal subunit protein bL34</fullName>
    </recommendedName>
    <alternativeName>
        <fullName evidence="3">50S ribosomal protein L34</fullName>
    </alternativeName>
</protein>
<feature type="chain" id="PRO_0000187457" description="Large ribosomal subunit protein bL34">
    <location>
        <begin position="1"/>
        <end position="45"/>
    </location>
</feature>
<feature type="region of interest" description="Disordered" evidence="2">
    <location>
        <begin position="1"/>
        <end position="45"/>
    </location>
</feature>
<feature type="compositionally biased region" description="Polar residues" evidence="2">
    <location>
        <begin position="1"/>
        <end position="10"/>
    </location>
</feature>
<feature type="compositionally biased region" description="Basic residues" evidence="2">
    <location>
        <begin position="11"/>
        <end position="20"/>
    </location>
</feature>
<feature type="compositionally biased region" description="Basic residues" evidence="2">
    <location>
        <begin position="31"/>
        <end position="45"/>
    </location>
</feature>
<evidence type="ECO:0000255" key="1">
    <source>
        <dbReference type="HAMAP-Rule" id="MF_00391"/>
    </source>
</evidence>
<evidence type="ECO:0000256" key="2">
    <source>
        <dbReference type="SAM" id="MobiDB-lite"/>
    </source>
</evidence>
<evidence type="ECO:0000305" key="3"/>
<dbReference type="EMBL" id="AE014299">
    <property type="protein sequence ID" value="AAN53094.1"/>
    <property type="molecule type" value="Genomic_DNA"/>
</dbReference>
<dbReference type="RefSeq" id="NP_715649.1">
    <property type="nucleotide sequence ID" value="NC_004347.2"/>
</dbReference>
<dbReference type="RefSeq" id="WP_011070423.1">
    <property type="nucleotide sequence ID" value="NZ_CP053946.1"/>
</dbReference>
<dbReference type="SMR" id="Q8EKT3"/>
<dbReference type="STRING" id="211586.SO_0007"/>
<dbReference type="PaxDb" id="211586-SO_0007"/>
<dbReference type="GeneID" id="94725976"/>
<dbReference type="KEGG" id="son:SO_0007"/>
<dbReference type="PATRIC" id="fig|211586.12.peg.7"/>
<dbReference type="eggNOG" id="COG0230">
    <property type="taxonomic scope" value="Bacteria"/>
</dbReference>
<dbReference type="HOGENOM" id="CLU_129938_2_0_6"/>
<dbReference type="PhylomeDB" id="Q8EKT3"/>
<dbReference type="BioCyc" id="SONE211586:G1GMP-7-MONOMER"/>
<dbReference type="Proteomes" id="UP000008186">
    <property type="component" value="Chromosome"/>
</dbReference>
<dbReference type="GO" id="GO:1990904">
    <property type="term" value="C:ribonucleoprotein complex"/>
    <property type="evidence" value="ECO:0007669"/>
    <property type="project" value="UniProtKB-KW"/>
</dbReference>
<dbReference type="GO" id="GO:0005840">
    <property type="term" value="C:ribosome"/>
    <property type="evidence" value="ECO:0007669"/>
    <property type="project" value="UniProtKB-KW"/>
</dbReference>
<dbReference type="GO" id="GO:0003735">
    <property type="term" value="F:structural constituent of ribosome"/>
    <property type="evidence" value="ECO:0007669"/>
    <property type="project" value="InterPro"/>
</dbReference>
<dbReference type="GO" id="GO:0006412">
    <property type="term" value="P:translation"/>
    <property type="evidence" value="ECO:0007669"/>
    <property type="project" value="UniProtKB-UniRule"/>
</dbReference>
<dbReference type="FunFam" id="1.10.287.3980:FF:000001">
    <property type="entry name" value="Mitochondrial ribosomal protein L34"/>
    <property type="match status" value="1"/>
</dbReference>
<dbReference type="Gene3D" id="1.10.287.3980">
    <property type="match status" value="1"/>
</dbReference>
<dbReference type="HAMAP" id="MF_00391">
    <property type="entry name" value="Ribosomal_bL34"/>
    <property type="match status" value="1"/>
</dbReference>
<dbReference type="InterPro" id="IPR000271">
    <property type="entry name" value="Ribosomal_bL34"/>
</dbReference>
<dbReference type="InterPro" id="IPR020939">
    <property type="entry name" value="Ribosomal_bL34_CS"/>
</dbReference>
<dbReference type="NCBIfam" id="TIGR01030">
    <property type="entry name" value="rpmH_bact"/>
    <property type="match status" value="1"/>
</dbReference>
<dbReference type="PANTHER" id="PTHR14503:SF4">
    <property type="entry name" value="LARGE RIBOSOMAL SUBUNIT PROTEIN BL34M"/>
    <property type="match status" value="1"/>
</dbReference>
<dbReference type="PANTHER" id="PTHR14503">
    <property type="entry name" value="MITOCHONDRIAL RIBOSOMAL PROTEIN 34 FAMILY MEMBER"/>
    <property type="match status" value="1"/>
</dbReference>
<dbReference type="Pfam" id="PF00468">
    <property type="entry name" value="Ribosomal_L34"/>
    <property type="match status" value="1"/>
</dbReference>
<dbReference type="PROSITE" id="PS00784">
    <property type="entry name" value="RIBOSOMAL_L34"/>
    <property type="match status" value="1"/>
</dbReference>
<proteinExistence type="inferred from homology"/>
<reference key="1">
    <citation type="journal article" date="2002" name="Nat. Biotechnol.">
        <title>Genome sequence of the dissimilatory metal ion-reducing bacterium Shewanella oneidensis.</title>
        <authorList>
            <person name="Heidelberg J.F."/>
            <person name="Paulsen I.T."/>
            <person name="Nelson K.E."/>
            <person name="Gaidos E.J."/>
            <person name="Nelson W.C."/>
            <person name="Read T.D."/>
            <person name="Eisen J.A."/>
            <person name="Seshadri R."/>
            <person name="Ward N.L."/>
            <person name="Methe B.A."/>
            <person name="Clayton R.A."/>
            <person name="Meyer T."/>
            <person name="Tsapin A."/>
            <person name="Scott J."/>
            <person name="Beanan M.J."/>
            <person name="Brinkac L.M."/>
            <person name="Daugherty S.C."/>
            <person name="DeBoy R.T."/>
            <person name="Dodson R.J."/>
            <person name="Durkin A.S."/>
            <person name="Haft D.H."/>
            <person name="Kolonay J.F."/>
            <person name="Madupu R."/>
            <person name="Peterson J.D."/>
            <person name="Umayam L.A."/>
            <person name="White O."/>
            <person name="Wolf A.M."/>
            <person name="Vamathevan J.J."/>
            <person name="Weidman J.F."/>
            <person name="Impraim M."/>
            <person name="Lee K."/>
            <person name="Berry K.J."/>
            <person name="Lee C."/>
            <person name="Mueller J."/>
            <person name="Khouri H.M."/>
            <person name="Gill J."/>
            <person name="Utterback T.R."/>
            <person name="McDonald L.A."/>
            <person name="Feldblyum T.V."/>
            <person name="Smith H.O."/>
            <person name="Venter J.C."/>
            <person name="Nealson K.H."/>
            <person name="Fraser C.M."/>
        </authorList>
    </citation>
    <scope>NUCLEOTIDE SEQUENCE [LARGE SCALE GENOMIC DNA]</scope>
    <source>
        <strain>ATCC 700550 / JCM 31522 / CIP 106686 / LMG 19005 / NCIMB 14063 / MR-1</strain>
    </source>
</reference>
<sequence>MSKRTFQPSNLKRKRSHGFRARMATAGGRKVLARRRAKGRARLSA</sequence>
<gene>
    <name evidence="1" type="primary">rpmH</name>
    <name type="ordered locus">SO_0007</name>
</gene>
<organism>
    <name type="scientific">Shewanella oneidensis (strain ATCC 700550 / JCM 31522 / CIP 106686 / LMG 19005 / NCIMB 14063 / MR-1)</name>
    <dbReference type="NCBI Taxonomy" id="211586"/>
    <lineage>
        <taxon>Bacteria</taxon>
        <taxon>Pseudomonadati</taxon>
        <taxon>Pseudomonadota</taxon>
        <taxon>Gammaproteobacteria</taxon>
        <taxon>Alteromonadales</taxon>
        <taxon>Shewanellaceae</taxon>
        <taxon>Shewanella</taxon>
    </lineage>
</organism>
<name>RL34_SHEON</name>
<keyword id="KW-1185">Reference proteome</keyword>
<keyword id="KW-0687">Ribonucleoprotein</keyword>
<keyword id="KW-0689">Ribosomal protein</keyword>